<name>YBEY_SALPK</name>
<sequence length="157" mass="17840">MSQVILDLQLACENHAGLPDEAQFQRWLDGVIPQFQEEAEVTIRLVDEAESHDLNLTYRGKDKPTNVLSFPFEAPPGIEMPLLGDLIICRQVVEQEAQEQSKPLEAHWAHMVVHGSLHLLGYDHIDDDEAEEMESLETEIMLAMGYEDPYIAEKITE</sequence>
<protein>
    <recommendedName>
        <fullName evidence="1">Endoribonuclease YbeY</fullName>
        <ecNumber evidence="1">3.1.-.-</ecNumber>
    </recommendedName>
</protein>
<proteinExistence type="inferred from homology"/>
<evidence type="ECO:0000255" key="1">
    <source>
        <dbReference type="HAMAP-Rule" id="MF_00009"/>
    </source>
</evidence>
<accession>B5BCD3</accession>
<organism>
    <name type="scientific">Salmonella paratyphi A (strain AKU_12601)</name>
    <dbReference type="NCBI Taxonomy" id="554290"/>
    <lineage>
        <taxon>Bacteria</taxon>
        <taxon>Pseudomonadati</taxon>
        <taxon>Pseudomonadota</taxon>
        <taxon>Gammaproteobacteria</taxon>
        <taxon>Enterobacterales</taxon>
        <taxon>Enterobacteriaceae</taxon>
        <taxon>Salmonella</taxon>
    </lineage>
</organism>
<feature type="chain" id="PRO_1000089207" description="Endoribonuclease YbeY">
    <location>
        <begin position="1"/>
        <end position="157"/>
    </location>
</feature>
<feature type="binding site" evidence="1">
    <location>
        <position position="114"/>
    </location>
    <ligand>
        <name>Zn(2+)</name>
        <dbReference type="ChEBI" id="CHEBI:29105"/>
        <note>catalytic</note>
    </ligand>
</feature>
<feature type="binding site" evidence="1">
    <location>
        <position position="118"/>
    </location>
    <ligand>
        <name>Zn(2+)</name>
        <dbReference type="ChEBI" id="CHEBI:29105"/>
        <note>catalytic</note>
    </ligand>
</feature>
<feature type="binding site" evidence="1">
    <location>
        <position position="124"/>
    </location>
    <ligand>
        <name>Zn(2+)</name>
        <dbReference type="ChEBI" id="CHEBI:29105"/>
        <note>catalytic</note>
    </ligand>
</feature>
<reference key="1">
    <citation type="journal article" date="2009" name="BMC Genomics">
        <title>Pseudogene accumulation in the evolutionary histories of Salmonella enterica serovars Paratyphi A and Typhi.</title>
        <authorList>
            <person name="Holt K.E."/>
            <person name="Thomson N.R."/>
            <person name="Wain J."/>
            <person name="Langridge G.C."/>
            <person name="Hasan R."/>
            <person name="Bhutta Z.A."/>
            <person name="Quail M.A."/>
            <person name="Norbertczak H."/>
            <person name="Walker D."/>
            <person name="Simmonds M."/>
            <person name="White B."/>
            <person name="Bason N."/>
            <person name="Mungall K."/>
            <person name="Dougan G."/>
            <person name="Parkhill J."/>
        </authorList>
    </citation>
    <scope>NUCLEOTIDE SEQUENCE [LARGE SCALE GENOMIC DNA]</scope>
    <source>
        <strain>AKU_12601</strain>
    </source>
</reference>
<keyword id="KW-0963">Cytoplasm</keyword>
<keyword id="KW-0255">Endonuclease</keyword>
<keyword id="KW-0378">Hydrolase</keyword>
<keyword id="KW-0479">Metal-binding</keyword>
<keyword id="KW-0540">Nuclease</keyword>
<keyword id="KW-0690">Ribosome biogenesis</keyword>
<keyword id="KW-0698">rRNA processing</keyword>
<keyword id="KW-0862">Zinc</keyword>
<dbReference type="EC" id="3.1.-.-" evidence="1"/>
<dbReference type="EMBL" id="FM200053">
    <property type="protein sequence ID" value="CAR60125.1"/>
    <property type="molecule type" value="Genomic_DNA"/>
</dbReference>
<dbReference type="RefSeq" id="WP_000084478.1">
    <property type="nucleotide sequence ID" value="NC_011147.1"/>
</dbReference>
<dbReference type="SMR" id="B5BCD3"/>
<dbReference type="KEGG" id="sek:SSPA1925"/>
<dbReference type="HOGENOM" id="CLU_106710_0_1_6"/>
<dbReference type="Proteomes" id="UP000001869">
    <property type="component" value="Chromosome"/>
</dbReference>
<dbReference type="GO" id="GO:0005737">
    <property type="term" value="C:cytoplasm"/>
    <property type="evidence" value="ECO:0007669"/>
    <property type="project" value="UniProtKB-SubCell"/>
</dbReference>
<dbReference type="GO" id="GO:0004222">
    <property type="term" value="F:metalloendopeptidase activity"/>
    <property type="evidence" value="ECO:0007669"/>
    <property type="project" value="InterPro"/>
</dbReference>
<dbReference type="GO" id="GO:0004521">
    <property type="term" value="F:RNA endonuclease activity"/>
    <property type="evidence" value="ECO:0007669"/>
    <property type="project" value="UniProtKB-UniRule"/>
</dbReference>
<dbReference type="GO" id="GO:0008270">
    <property type="term" value="F:zinc ion binding"/>
    <property type="evidence" value="ECO:0007669"/>
    <property type="project" value="UniProtKB-UniRule"/>
</dbReference>
<dbReference type="GO" id="GO:0006364">
    <property type="term" value="P:rRNA processing"/>
    <property type="evidence" value="ECO:0007669"/>
    <property type="project" value="UniProtKB-UniRule"/>
</dbReference>
<dbReference type="Gene3D" id="3.40.390.30">
    <property type="entry name" value="Metalloproteases ('zincins'), catalytic domain"/>
    <property type="match status" value="1"/>
</dbReference>
<dbReference type="HAMAP" id="MF_00009">
    <property type="entry name" value="Endoribonucl_YbeY"/>
    <property type="match status" value="1"/>
</dbReference>
<dbReference type="InterPro" id="IPR023091">
    <property type="entry name" value="MetalPrtase_cat_dom_sf_prd"/>
</dbReference>
<dbReference type="InterPro" id="IPR002036">
    <property type="entry name" value="YbeY"/>
</dbReference>
<dbReference type="InterPro" id="IPR020549">
    <property type="entry name" value="YbeY_CS"/>
</dbReference>
<dbReference type="NCBIfam" id="TIGR00043">
    <property type="entry name" value="rRNA maturation RNase YbeY"/>
    <property type="match status" value="1"/>
</dbReference>
<dbReference type="PANTHER" id="PTHR46986">
    <property type="entry name" value="ENDORIBONUCLEASE YBEY, CHLOROPLASTIC"/>
    <property type="match status" value="1"/>
</dbReference>
<dbReference type="PANTHER" id="PTHR46986:SF1">
    <property type="entry name" value="ENDORIBONUCLEASE YBEY, CHLOROPLASTIC"/>
    <property type="match status" value="1"/>
</dbReference>
<dbReference type="Pfam" id="PF02130">
    <property type="entry name" value="YbeY"/>
    <property type="match status" value="1"/>
</dbReference>
<dbReference type="SUPFAM" id="SSF55486">
    <property type="entry name" value="Metalloproteases ('zincins'), catalytic domain"/>
    <property type="match status" value="1"/>
</dbReference>
<dbReference type="PROSITE" id="PS01306">
    <property type="entry name" value="UPF0054"/>
    <property type="match status" value="1"/>
</dbReference>
<gene>
    <name evidence="1" type="primary">ybeY</name>
    <name type="ordered locus">SSPA1925</name>
</gene>
<comment type="function">
    <text evidence="1">Single strand-specific metallo-endoribonuclease involved in late-stage 70S ribosome quality control and in maturation of the 3' terminus of the 16S rRNA.</text>
</comment>
<comment type="cofactor">
    <cofactor evidence="1">
        <name>Zn(2+)</name>
        <dbReference type="ChEBI" id="CHEBI:29105"/>
    </cofactor>
    <text evidence="1">Binds 1 zinc ion.</text>
</comment>
<comment type="subcellular location">
    <subcellularLocation>
        <location evidence="1">Cytoplasm</location>
    </subcellularLocation>
</comment>
<comment type="similarity">
    <text evidence="1">Belongs to the endoribonuclease YbeY family.</text>
</comment>